<sequence>MGLLPLVKKLGFIIFLLVSASAFALCSAGRSSILIYSQEDDHPEVVERRIHEHERILRMNSRDYGHSSPKPKLVRPPFKLIPN</sequence>
<proteinExistence type="evidence at protein level"/>
<feature type="signal peptide" evidence="2">
    <location>
        <begin position="1"/>
        <end position="28"/>
    </location>
</feature>
<feature type="chain" id="PRO_5009340946" description="Protein CASPARIAN STRIP INTEGRITY FACTOR 2">
    <location>
        <begin position="29"/>
        <end position="83"/>
    </location>
</feature>
<feature type="region of interest" description="Disordered" evidence="3">
    <location>
        <begin position="61"/>
        <end position="83"/>
    </location>
</feature>
<feature type="modified residue" description="Sulfotyrosine" evidence="1">
    <location>
        <position position="64"/>
    </location>
</feature>
<feature type="modified residue" description="Hydroxyproline" evidence="1">
    <location>
        <position position="69"/>
    </location>
</feature>
<feature type="modified residue" description="Hydroxyproline" evidence="1">
    <location>
        <position position="71"/>
    </location>
</feature>
<name>CIF2_ARATH</name>
<organism>
    <name type="scientific">Arabidopsis thaliana</name>
    <name type="common">Mouse-ear cress</name>
    <dbReference type="NCBI Taxonomy" id="3702"/>
    <lineage>
        <taxon>Eukaryota</taxon>
        <taxon>Viridiplantae</taxon>
        <taxon>Streptophyta</taxon>
        <taxon>Embryophyta</taxon>
        <taxon>Tracheophyta</taxon>
        <taxon>Spermatophyta</taxon>
        <taxon>Magnoliopsida</taxon>
        <taxon>eudicotyledons</taxon>
        <taxon>Gunneridae</taxon>
        <taxon>Pentapetalae</taxon>
        <taxon>rosids</taxon>
        <taxon>malvids</taxon>
        <taxon>Brassicales</taxon>
        <taxon>Brassicaceae</taxon>
        <taxon>Camelineae</taxon>
        <taxon>Arabidopsis</taxon>
    </lineage>
</organism>
<protein>
    <recommendedName>
        <fullName evidence="5">Protein CASPARIAN STRIP INTEGRITY FACTOR 2</fullName>
    </recommendedName>
</protein>
<gene>
    <name evidence="5" type="primary">CIF2</name>
    <name evidence="6" type="ordered locus">At4g34600</name>
    <name evidence="7" type="ORF">T4L20.180</name>
</gene>
<accession>O65684</accession>
<dbReference type="EMBL" id="AL023094">
    <property type="protein sequence ID" value="CAA18839.1"/>
    <property type="molecule type" value="Genomic_DNA"/>
</dbReference>
<dbReference type="EMBL" id="AL161585">
    <property type="protein sequence ID" value="CAB80177.1"/>
    <property type="molecule type" value="Genomic_DNA"/>
</dbReference>
<dbReference type="EMBL" id="CP002687">
    <property type="protein sequence ID" value="AEE86398.1"/>
    <property type="molecule type" value="Genomic_DNA"/>
</dbReference>
<dbReference type="EMBL" id="BT010809">
    <property type="protein sequence ID" value="AAR24176.1"/>
    <property type="molecule type" value="mRNA"/>
</dbReference>
<dbReference type="EMBL" id="BT014676">
    <property type="protein sequence ID" value="AAT35234.1"/>
    <property type="molecule type" value="mRNA"/>
</dbReference>
<dbReference type="PIR" id="T05280">
    <property type="entry name" value="T05280"/>
</dbReference>
<dbReference type="RefSeq" id="NP_195186.1">
    <molecule id="O65684-1"/>
    <property type="nucleotide sequence ID" value="NM_119626.4"/>
</dbReference>
<dbReference type="PDB" id="6S6Q">
    <property type="method" value="X-ray"/>
    <property type="resolution" value="2.95 A"/>
    <property type="chains" value="C/D=63-83"/>
</dbReference>
<dbReference type="PDBsum" id="6S6Q"/>
<dbReference type="SMR" id="O65684"/>
<dbReference type="FunCoup" id="O65684">
    <property type="interactions" value="38"/>
</dbReference>
<dbReference type="STRING" id="3702.O65684"/>
<dbReference type="PaxDb" id="3702-AT4G34600.1"/>
<dbReference type="ProteomicsDB" id="246910">
    <molecule id="O65684-1"/>
</dbReference>
<dbReference type="EnsemblPlants" id="AT4G34600.1">
    <molecule id="O65684-1"/>
    <property type="protein sequence ID" value="AT4G34600.1"/>
    <property type="gene ID" value="AT4G34600"/>
</dbReference>
<dbReference type="GeneID" id="829612"/>
<dbReference type="Gramene" id="AT4G34600.1">
    <molecule id="O65684-1"/>
    <property type="protein sequence ID" value="AT4G34600.1"/>
    <property type="gene ID" value="AT4G34600"/>
</dbReference>
<dbReference type="KEGG" id="ath:AT4G34600"/>
<dbReference type="Araport" id="AT4G34600"/>
<dbReference type="TAIR" id="AT4G34600">
    <property type="gene designation" value="CIF2"/>
</dbReference>
<dbReference type="HOGENOM" id="CLU_173636_2_0_1"/>
<dbReference type="InParanoid" id="O65684"/>
<dbReference type="OMA" id="YREDDNH"/>
<dbReference type="OrthoDB" id="1936508at2759"/>
<dbReference type="PhylomeDB" id="O65684"/>
<dbReference type="PRO" id="PR:O65684"/>
<dbReference type="Proteomes" id="UP000006548">
    <property type="component" value="Chromosome 4"/>
</dbReference>
<dbReference type="ExpressionAtlas" id="O65684">
    <property type="expression patterns" value="baseline and differential"/>
</dbReference>
<dbReference type="GO" id="GO:0048226">
    <property type="term" value="C:Casparian strip"/>
    <property type="evidence" value="ECO:0000315"/>
    <property type="project" value="UniProtKB"/>
</dbReference>
<dbReference type="GO" id="GO:0005179">
    <property type="term" value="F:hormone activity"/>
    <property type="evidence" value="ECO:0007669"/>
    <property type="project" value="UniProtKB-KW"/>
</dbReference>
<dbReference type="GO" id="GO:0160073">
    <property type="term" value="P:Casparian strip assembly"/>
    <property type="evidence" value="ECO:0000315"/>
    <property type="project" value="UniProtKB"/>
</dbReference>
<dbReference type="GO" id="GO:0009860">
    <property type="term" value="P:pollen tube growth"/>
    <property type="evidence" value="ECO:0000270"/>
    <property type="project" value="TAIR"/>
</dbReference>
<dbReference type="GO" id="GO:2000067">
    <property type="term" value="P:regulation of root morphogenesis"/>
    <property type="evidence" value="ECO:0000315"/>
    <property type="project" value="UniProtKB"/>
</dbReference>
<dbReference type="InterPro" id="IPR038974">
    <property type="entry name" value="CIF1/2"/>
</dbReference>
<dbReference type="PANTHER" id="PTHR35290">
    <property type="entry name" value="PROTEIN CASPARIAN STRIP INTEGRITY FACTOR 1-RELATED"/>
    <property type="match status" value="1"/>
</dbReference>
<dbReference type="PANTHER" id="PTHR35290:SF6">
    <property type="entry name" value="PROTEIN CASPARIAN STRIP INTEGRITY FACTOR 2"/>
    <property type="match status" value="1"/>
</dbReference>
<evidence type="ECO:0000250" key="1">
    <source>
        <dbReference type="UniProtKB" id="Q84MD2"/>
    </source>
</evidence>
<evidence type="ECO:0000255" key="2"/>
<evidence type="ECO:0000256" key="3">
    <source>
        <dbReference type="SAM" id="MobiDB-lite"/>
    </source>
</evidence>
<evidence type="ECO:0000269" key="4">
    <source>
    </source>
</evidence>
<evidence type="ECO:0000303" key="5">
    <source>
    </source>
</evidence>
<evidence type="ECO:0000312" key="6">
    <source>
        <dbReference type="Araport" id="AT4G34600"/>
    </source>
</evidence>
<evidence type="ECO:0000312" key="7">
    <source>
        <dbReference type="EMBL" id="CAA18839.1"/>
    </source>
</evidence>
<comment type="function">
    <text evidence="4">Peptide hormone required for contiguous Casparian strip diffusion barrier formation in roots via the regulation of CASPs protein expression and distribution in a GSO1-GSO2 signaling pathway. The Casparian strip is required for ion homeostasis (e.g. iron and potassium ions).</text>
</comment>
<comment type="subunit">
    <text evidence="4">Interacts with the specific receptor kinases GSO1 and GSO2.</text>
</comment>
<comment type="alternative products">
    <event type="alternative splicing"/>
    <isoform>
        <id>O65684-1</id>
        <name>1</name>
        <sequence type="displayed"/>
    </isoform>
    <text evidence="6">Additional isoforms seem to exist.</text>
</comment>
<comment type="tissue specificity">
    <text evidence="4">Expressed exclusively in the root stele.</text>
</comment>
<comment type="developmental stage">
    <text evidence="4">Confined to the root stele in the elongation and differentiation zones of both primary and lateral roots. Disappears at the sites of lateral root initiation. In the root tip, present at and above approximately 10 cells after the onset of elongation.</text>
</comment>
<comment type="induction">
    <text evidence="4">Induced by excess iron and further synergistically regulated by lowering the medium pH.</text>
</comment>
<comment type="disruption phenotype">
    <text evidence="4">Abnormal endodermal barrier formation in cif2-1. The double mutant cif1-1 cif2-1 is defective in ion homeostasis in the xylem due to defect in endodermal barrier formation in the roots. Highly sensitive to excess iron. Retarded growth under low-potassium conditions. Repeatedly interrupted, discontinuous Casparian strip due to patch-like localization of the CASPs proteins. Reduced rosette leaf size.</text>
</comment>
<reference key="1">
    <citation type="journal article" date="1999" name="Nature">
        <title>Sequence and analysis of chromosome 4 of the plant Arabidopsis thaliana.</title>
        <authorList>
            <person name="Mayer K.F.X."/>
            <person name="Schueller C."/>
            <person name="Wambutt R."/>
            <person name="Murphy G."/>
            <person name="Volckaert G."/>
            <person name="Pohl T."/>
            <person name="Duesterhoeft A."/>
            <person name="Stiekema W."/>
            <person name="Entian K.-D."/>
            <person name="Terryn N."/>
            <person name="Harris B."/>
            <person name="Ansorge W."/>
            <person name="Brandt P."/>
            <person name="Grivell L.A."/>
            <person name="Rieger M."/>
            <person name="Weichselgartner M."/>
            <person name="de Simone V."/>
            <person name="Obermaier B."/>
            <person name="Mache R."/>
            <person name="Mueller M."/>
            <person name="Kreis M."/>
            <person name="Delseny M."/>
            <person name="Puigdomenech P."/>
            <person name="Watson M."/>
            <person name="Schmidtheini T."/>
            <person name="Reichert B."/>
            <person name="Portetelle D."/>
            <person name="Perez-Alonso M."/>
            <person name="Boutry M."/>
            <person name="Bancroft I."/>
            <person name="Vos P."/>
            <person name="Hoheisel J."/>
            <person name="Zimmermann W."/>
            <person name="Wedler H."/>
            <person name="Ridley P."/>
            <person name="Langham S.-A."/>
            <person name="McCullagh B."/>
            <person name="Bilham L."/>
            <person name="Robben J."/>
            <person name="van der Schueren J."/>
            <person name="Grymonprez B."/>
            <person name="Chuang Y.-J."/>
            <person name="Vandenbussche F."/>
            <person name="Braeken M."/>
            <person name="Weltjens I."/>
            <person name="Voet M."/>
            <person name="Bastiaens I."/>
            <person name="Aert R."/>
            <person name="Defoor E."/>
            <person name="Weitzenegger T."/>
            <person name="Bothe G."/>
            <person name="Ramsperger U."/>
            <person name="Hilbert H."/>
            <person name="Braun M."/>
            <person name="Holzer E."/>
            <person name="Brandt A."/>
            <person name="Peters S."/>
            <person name="van Staveren M."/>
            <person name="Dirkse W."/>
            <person name="Mooijman P."/>
            <person name="Klein Lankhorst R."/>
            <person name="Rose M."/>
            <person name="Hauf J."/>
            <person name="Koetter P."/>
            <person name="Berneiser S."/>
            <person name="Hempel S."/>
            <person name="Feldpausch M."/>
            <person name="Lamberth S."/>
            <person name="Van den Daele H."/>
            <person name="De Keyser A."/>
            <person name="Buysshaert C."/>
            <person name="Gielen J."/>
            <person name="Villarroel R."/>
            <person name="De Clercq R."/>
            <person name="van Montagu M."/>
            <person name="Rogers J."/>
            <person name="Cronin A."/>
            <person name="Quail M.A."/>
            <person name="Bray-Allen S."/>
            <person name="Clark L."/>
            <person name="Doggett J."/>
            <person name="Hall S."/>
            <person name="Kay M."/>
            <person name="Lennard N."/>
            <person name="McLay K."/>
            <person name="Mayes R."/>
            <person name="Pettett A."/>
            <person name="Rajandream M.A."/>
            <person name="Lyne M."/>
            <person name="Benes V."/>
            <person name="Rechmann S."/>
            <person name="Borkova D."/>
            <person name="Bloecker H."/>
            <person name="Scharfe M."/>
            <person name="Grimm M."/>
            <person name="Loehnert T.-H."/>
            <person name="Dose S."/>
            <person name="de Haan M."/>
            <person name="Maarse A.C."/>
            <person name="Schaefer M."/>
            <person name="Mueller-Auer S."/>
            <person name="Gabel C."/>
            <person name="Fuchs M."/>
            <person name="Fartmann B."/>
            <person name="Granderath K."/>
            <person name="Dauner D."/>
            <person name="Herzl A."/>
            <person name="Neumann S."/>
            <person name="Argiriou A."/>
            <person name="Vitale D."/>
            <person name="Liguori R."/>
            <person name="Piravandi E."/>
            <person name="Massenet O."/>
            <person name="Quigley F."/>
            <person name="Clabauld G."/>
            <person name="Muendlein A."/>
            <person name="Felber R."/>
            <person name="Schnabl S."/>
            <person name="Hiller R."/>
            <person name="Schmidt W."/>
            <person name="Lecharny A."/>
            <person name="Aubourg S."/>
            <person name="Chefdor F."/>
            <person name="Cooke R."/>
            <person name="Berger C."/>
            <person name="Monfort A."/>
            <person name="Casacuberta E."/>
            <person name="Gibbons T."/>
            <person name="Weber N."/>
            <person name="Vandenbol M."/>
            <person name="Bargues M."/>
            <person name="Terol J."/>
            <person name="Torres A."/>
            <person name="Perez-Perez A."/>
            <person name="Purnelle B."/>
            <person name="Bent E."/>
            <person name="Johnson S."/>
            <person name="Tacon D."/>
            <person name="Jesse T."/>
            <person name="Heijnen L."/>
            <person name="Schwarz S."/>
            <person name="Scholler P."/>
            <person name="Heber S."/>
            <person name="Francs P."/>
            <person name="Bielke C."/>
            <person name="Frishman D."/>
            <person name="Haase D."/>
            <person name="Lemcke K."/>
            <person name="Mewes H.-W."/>
            <person name="Stocker S."/>
            <person name="Zaccaria P."/>
            <person name="Bevan M."/>
            <person name="Wilson R.K."/>
            <person name="de la Bastide M."/>
            <person name="Habermann K."/>
            <person name="Parnell L."/>
            <person name="Dedhia N."/>
            <person name="Gnoj L."/>
            <person name="Schutz K."/>
            <person name="Huang E."/>
            <person name="Spiegel L."/>
            <person name="Sekhon M."/>
            <person name="Murray J."/>
            <person name="Sheet P."/>
            <person name="Cordes M."/>
            <person name="Abu-Threideh J."/>
            <person name="Stoneking T."/>
            <person name="Kalicki J."/>
            <person name="Graves T."/>
            <person name="Harmon G."/>
            <person name="Edwards J."/>
            <person name="Latreille P."/>
            <person name="Courtney L."/>
            <person name="Cloud J."/>
            <person name="Abbott A."/>
            <person name="Scott K."/>
            <person name="Johnson D."/>
            <person name="Minx P."/>
            <person name="Bentley D."/>
            <person name="Fulton B."/>
            <person name="Miller N."/>
            <person name="Greco T."/>
            <person name="Kemp K."/>
            <person name="Kramer J."/>
            <person name="Fulton L."/>
            <person name="Mardis E."/>
            <person name="Dante M."/>
            <person name="Pepin K."/>
            <person name="Hillier L.W."/>
            <person name="Nelson J."/>
            <person name="Spieth J."/>
            <person name="Ryan E."/>
            <person name="Andrews S."/>
            <person name="Geisel C."/>
            <person name="Layman D."/>
            <person name="Du H."/>
            <person name="Ali J."/>
            <person name="Berghoff A."/>
            <person name="Jones K."/>
            <person name="Drone K."/>
            <person name="Cotton M."/>
            <person name="Joshu C."/>
            <person name="Antonoiu B."/>
            <person name="Zidanic M."/>
            <person name="Strong C."/>
            <person name="Sun H."/>
            <person name="Lamar B."/>
            <person name="Yordan C."/>
            <person name="Ma P."/>
            <person name="Zhong J."/>
            <person name="Preston R."/>
            <person name="Vil D."/>
            <person name="Shekher M."/>
            <person name="Matero A."/>
            <person name="Shah R."/>
            <person name="Swaby I.K."/>
            <person name="O'Shaughnessy A."/>
            <person name="Rodriguez M."/>
            <person name="Hoffman J."/>
            <person name="Till S."/>
            <person name="Granat S."/>
            <person name="Shohdy N."/>
            <person name="Hasegawa A."/>
            <person name="Hameed A."/>
            <person name="Lodhi M."/>
            <person name="Johnson A."/>
            <person name="Chen E."/>
            <person name="Marra M.A."/>
            <person name="Martienssen R."/>
            <person name="McCombie W.R."/>
        </authorList>
    </citation>
    <scope>NUCLEOTIDE SEQUENCE [LARGE SCALE GENOMIC DNA]</scope>
    <source>
        <strain>cv. Columbia</strain>
    </source>
</reference>
<reference key="2">
    <citation type="journal article" date="2017" name="Plant J.">
        <title>Araport11: a complete reannotation of the Arabidopsis thaliana reference genome.</title>
        <authorList>
            <person name="Cheng C.Y."/>
            <person name="Krishnakumar V."/>
            <person name="Chan A.P."/>
            <person name="Thibaud-Nissen F."/>
            <person name="Schobel S."/>
            <person name="Town C.D."/>
        </authorList>
    </citation>
    <scope>GENOME REANNOTATION</scope>
    <source>
        <strain>cv. Columbia</strain>
    </source>
</reference>
<reference key="3">
    <citation type="submission" date="2004-05" db="EMBL/GenBank/DDBJ databases">
        <title>Arabidopsis ORF clones.</title>
        <authorList>
            <person name="Cheuk R.F."/>
            <person name="Chen H."/>
            <person name="Kim C.J."/>
            <person name="Shinn P."/>
            <person name="Ecker J.R."/>
        </authorList>
    </citation>
    <scope>NUCLEOTIDE SEQUENCE [LARGE SCALE MRNA]</scope>
    <source>
        <strain>cv. Columbia</strain>
    </source>
</reference>
<reference key="4">
    <citation type="journal article" date="2017" name="Science">
        <title>A peptide hormone required for Casparian strip diffusion barrier formation in Arabidopsis roots.</title>
        <authorList>
            <person name="Nakayama T."/>
            <person name="Shinohara H."/>
            <person name="Tanaka M."/>
            <person name="Baba K."/>
            <person name="Ogawa-Ohnishi M."/>
            <person name="Matsubayashi Y."/>
        </authorList>
    </citation>
    <scope>FUNCTION</scope>
    <scope>DISRUPTION PHENOTYPE</scope>
    <scope>TISSUE SPECIFICITY</scope>
    <scope>DEVELOPMENTAL STAGE</scope>
    <scope>INTERACTION WITH GSO1 AND GSO2</scope>
    <scope>INDUCTION BY IRON</scope>
</reference>
<keyword id="KW-0002">3D-structure</keyword>
<keyword id="KW-0025">Alternative splicing</keyword>
<keyword id="KW-0961">Cell wall biogenesis/degradation</keyword>
<keyword id="KW-0217">Developmental protein</keyword>
<keyword id="KW-0372">Hormone</keyword>
<keyword id="KW-0379">Hydroxylation</keyword>
<keyword id="KW-1185">Reference proteome</keyword>
<keyword id="KW-0732">Signal</keyword>
<keyword id="KW-0765">Sulfation</keyword>